<comment type="alternative products">
    <event type="alternative splicing"/>
    <isoform>
        <id>Q96H79-1</id>
        <name>1</name>
        <sequence type="displayed"/>
    </isoform>
    <isoform>
        <id>Q96H79-2</id>
        <name>2</name>
        <sequence type="described" ref="VSP_033210 VSP_033211"/>
    </isoform>
</comment>
<comment type="caution">
    <text evidence="4">Despite its name, it does not contain a canonical C3H1-type zinc-finger.</text>
</comment>
<gene>
    <name type="primary">ZC3HAV1L</name>
    <name type="synonym">C7orf39</name>
</gene>
<reference key="1">
    <citation type="journal article" date="2003" name="Nature">
        <title>The DNA sequence of human chromosome 7.</title>
        <authorList>
            <person name="Hillier L.W."/>
            <person name="Fulton R.S."/>
            <person name="Fulton L.A."/>
            <person name="Graves T.A."/>
            <person name="Pepin K.H."/>
            <person name="Wagner-McPherson C."/>
            <person name="Layman D."/>
            <person name="Maas J."/>
            <person name="Jaeger S."/>
            <person name="Walker R."/>
            <person name="Wylie K."/>
            <person name="Sekhon M."/>
            <person name="Becker M.C."/>
            <person name="O'Laughlin M.D."/>
            <person name="Schaller M.E."/>
            <person name="Fewell G.A."/>
            <person name="Delehaunty K.D."/>
            <person name="Miner T.L."/>
            <person name="Nash W.E."/>
            <person name="Cordes M."/>
            <person name="Du H."/>
            <person name="Sun H."/>
            <person name="Edwards J."/>
            <person name="Bradshaw-Cordum H."/>
            <person name="Ali J."/>
            <person name="Andrews S."/>
            <person name="Isak A."/>
            <person name="Vanbrunt A."/>
            <person name="Nguyen C."/>
            <person name="Du F."/>
            <person name="Lamar B."/>
            <person name="Courtney L."/>
            <person name="Kalicki J."/>
            <person name="Ozersky P."/>
            <person name="Bielicki L."/>
            <person name="Scott K."/>
            <person name="Holmes A."/>
            <person name="Harkins R."/>
            <person name="Harris A."/>
            <person name="Strong C.M."/>
            <person name="Hou S."/>
            <person name="Tomlinson C."/>
            <person name="Dauphin-Kohlberg S."/>
            <person name="Kozlowicz-Reilly A."/>
            <person name="Leonard S."/>
            <person name="Rohlfing T."/>
            <person name="Rock S.M."/>
            <person name="Tin-Wollam A.-M."/>
            <person name="Abbott A."/>
            <person name="Minx P."/>
            <person name="Maupin R."/>
            <person name="Strowmatt C."/>
            <person name="Latreille P."/>
            <person name="Miller N."/>
            <person name="Johnson D."/>
            <person name="Murray J."/>
            <person name="Woessner J.P."/>
            <person name="Wendl M.C."/>
            <person name="Yang S.-P."/>
            <person name="Schultz B.R."/>
            <person name="Wallis J.W."/>
            <person name="Spieth J."/>
            <person name="Bieri T.A."/>
            <person name="Nelson J.O."/>
            <person name="Berkowicz N."/>
            <person name="Wohldmann P.E."/>
            <person name="Cook L.L."/>
            <person name="Hickenbotham M.T."/>
            <person name="Eldred J."/>
            <person name="Williams D."/>
            <person name="Bedell J.A."/>
            <person name="Mardis E.R."/>
            <person name="Clifton S.W."/>
            <person name="Chissoe S.L."/>
            <person name="Marra M.A."/>
            <person name="Raymond C."/>
            <person name="Haugen E."/>
            <person name="Gillett W."/>
            <person name="Zhou Y."/>
            <person name="James R."/>
            <person name="Phelps K."/>
            <person name="Iadanoto S."/>
            <person name="Bubb K."/>
            <person name="Simms E."/>
            <person name="Levy R."/>
            <person name="Clendenning J."/>
            <person name="Kaul R."/>
            <person name="Kent W.J."/>
            <person name="Furey T.S."/>
            <person name="Baertsch R.A."/>
            <person name="Brent M.R."/>
            <person name="Keibler E."/>
            <person name="Flicek P."/>
            <person name="Bork P."/>
            <person name="Suyama M."/>
            <person name="Bailey J.A."/>
            <person name="Portnoy M.E."/>
            <person name="Torrents D."/>
            <person name="Chinwalla A.T."/>
            <person name="Gish W.R."/>
            <person name="Eddy S.R."/>
            <person name="McPherson J.D."/>
            <person name="Olson M.V."/>
            <person name="Eichler E.E."/>
            <person name="Green E.D."/>
            <person name="Waterston R.H."/>
            <person name="Wilson R.K."/>
        </authorList>
    </citation>
    <scope>NUCLEOTIDE SEQUENCE [LARGE SCALE GENOMIC DNA]</scope>
</reference>
<reference key="2">
    <citation type="journal article" date="2004" name="Genome Res.">
        <title>The status, quality, and expansion of the NIH full-length cDNA project: the Mammalian Gene Collection (MGC).</title>
        <authorList>
            <consortium name="The MGC Project Team"/>
        </authorList>
    </citation>
    <scope>NUCLEOTIDE SEQUENCE [LARGE SCALE MRNA] (ISOFORMS 1 AND 2)</scope>
    <source>
        <tissue>Brain</tissue>
        <tissue>Testis</tissue>
    </source>
</reference>
<reference key="3">
    <citation type="submission" date="2010-01" db="UniProtKB">
        <authorList>
            <person name="Bienvenut W.V."/>
        </authorList>
    </citation>
    <scope>PROTEIN SEQUENCE OF 2-12; 142-154 AND 249-291</scope>
    <scope>CLEAVAGE OF INITIATOR METHIONINE</scope>
    <scope>ACETYLATION AT ALA-2</scope>
    <scope>IDENTIFICATION BY MASS SPECTROMETRY</scope>
    <source>
        <tissue>Ovarian carcinoma</tissue>
    </source>
</reference>
<reference key="4">
    <citation type="journal article" date="2008" name="Proc. Natl. Acad. Sci. U.S.A.">
        <title>A quantitative atlas of mitotic phosphorylation.</title>
        <authorList>
            <person name="Dephoure N."/>
            <person name="Zhou C."/>
            <person name="Villen J."/>
            <person name="Beausoleil S.A."/>
            <person name="Bakalarski C.E."/>
            <person name="Elledge S.J."/>
            <person name="Gygi S.P."/>
        </authorList>
    </citation>
    <scope>IDENTIFICATION BY MASS SPECTROMETRY [LARGE SCALE ANALYSIS]</scope>
    <source>
        <tissue>Cervix carcinoma</tissue>
    </source>
</reference>
<reference key="5">
    <citation type="journal article" date="2009" name="Anal. Chem.">
        <title>Lys-N and trypsin cover complementary parts of the phosphoproteome in a refined SCX-based approach.</title>
        <authorList>
            <person name="Gauci S."/>
            <person name="Helbig A.O."/>
            <person name="Slijper M."/>
            <person name="Krijgsveld J."/>
            <person name="Heck A.J."/>
            <person name="Mohammed S."/>
        </authorList>
    </citation>
    <scope>ACETYLATION [LARGE SCALE ANALYSIS] AT ALA-2</scope>
    <scope>CLEAVAGE OF INITIATOR METHIONINE [LARGE SCALE ANALYSIS]</scope>
    <scope>IDENTIFICATION BY MASS SPECTROMETRY [LARGE SCALE ANALYSIS]</scope>
</reference>
<reference key="6">
    <citation type="journal article" date="2010" name="Sci. Signal.">
        <title>Quantitative phosphoproteomics reveals widespread full phosphorylation site occupancy during mitosis.</title>
        <authorList>
            <person name="Olsen J.V."/>
            <person name="Vermeulen M."/>
            <person name="Santamaria A."/>
            <person name="Kumar C."/>
            <person name="Miller M.L."/>
            <person name="Jensen L.J."/>
            <person name="Gnad F."/>
            <person name="Cox J."/>
            <person name="Jensen T.S."/>
            <person name="Nigg E.A."/>
            <person name="Brunak S."/>
            <person name="Mann M."/>
        </authorList>
    </citation>
    <scope>IDENTIFICATION BY MASS SPECTROMETRY [LARGE SCALE ANALYSIS]</scope>
    <source>
        <tissue>Cervix carcinoma</tissue>
    </source>
</reference>
<reference key="7">
    <citation type="journal article" date="2011" name="BMC Syst. Biol.">
        <title>Initial characterization of the human central proteome.</title>
        <authorList>
            <person name="Burkard T.R."/>
            <person name="Planyavsky M."/>
            <person name="Kaupe I."/>
            <person name="Breitwieser F.P."/>
            <person name="Buerckstuemmer T."/>
            <person name="Bennett K.L."/>
            <person name="Superti-Furga G."/>
            <person name="Colinge J."/>
        </authorList>
    </citation>
    <scope>IDENTIFICATION BY MASS SPECTROMETRY [LARGE SCALE ANALYSIS]</scope>
</reference>
<reference key="8">
    <citation type="journal article" date="2013" name="J. Proteome Res.">
        <title>Toward a comprehensive characterization of a human cancer cell phosphoproteome.</title>
        <authorList>
            <person name="Zhou H."/>
            <person name="Di Palma S."/>
            <person name="Preisinger C."/>
            <person name="Peng M."/>
            <person name="Polat A.N."/>
            <person name="Heck A.J."/>
            <person name="Mohammed S."/>
        </authorList>
    </citation>
    <scope>IDENTIFICATION BY MASS SPECTROMETRY [LARGE SCALE ANALYSIS]</scope>
    <source>
        <tissue>Cervix carcinoma</tissue>
    </source>
</reference>
<organism>
    <name type="scientific">Homo sapiens</name>
    <name type="common">Human</name>
    <dbReference type="NCBI Taxonomy" id="9606"/>
    <lineage>
        <taxon>Eukaryota</taxon>
        <taxon>Metazoa</taxon>
        <taxon>Chordata</taxon>
        <taxon>Craniata</taxon>
        <taxon>Vertebrata</taxon>
        <taxon>Euteleostomi</taxon>
        <taxon>Mammalia</taxon>
        <taxon>Eutheria</taxon>
        <taxon>Euarchontoglires</taxon>
        <taxon>Primates</taxon>
        <taxon>Haplorrhini</taxon>
        <taxon>Catarrhini</taxon>
        <taxon>Hominidae</taxon>
        <taxon>Homo</taxon>
    </lineage>
</organism>
<evidence type="ECO:0000256" key="1">
    <source>
        <dbReference type="SAM" id="MobiDB-lite"/>
    </source>
</evidence>
<evidence type="ECO:0000269" key="2">
    <source ref="3"/>
</evidence>
<evidence type="ECO:0000303" key="3">
    <source>
    </source>
</evidence>
<evidence type="ECO:0000305" key="4"/>
<evidence type="ECO:0007744" key="5">
    <source>
    </source>
</evidence>
<protein>
    <recommendedName>
        <fullName>Zinc finger CCCH-type antiviral protein 1-like</fullName>
    </recommendedName>
</protein>
<feature type="initiator methionine" description="Removed" evidence="2 5">
    <location>
        <position position="1"/>
    </location>
</feature>
<feature type="chain" id="PRO_0000331459" description="Zinc finger CCCH-type antiviral protein 1-like">
    <location>
        <begin position="2"/>
        <end position="300"/>
    </location>
</feature>
<feature type="region of interest" description="Disordered" evidence="1">
    <location>
        <begin position="252"/>
        <end position="300"/>
    </location>
</feature>
<feature type="compositionally biased region" description="Polar residues" evidence="1">
    <location>
        <begin position="252"/>
        <end position="263"/>
    </location>
</feature>
<feature type="compositionally biased region" description="Low complexity" evidence="1">
    <location>
        <begin position="271"/>
        <end position="283"/>
    </location>
</feature>
<feature type="modified residue" description="N-acetylalanine" evidence="2 5">
    <location>
        <position position="2"/>
    </location>
</feature>
<feature type="splice variant" id="VSP_033210" description="In isoform 2." evidence="3">
    <original>SVRLCARYQRGECQAC</original>
    <variation>GTIGACHHTQLIFLGF</variation>
    <location>
        <begin position="87"/>
        <end position="102"/>
    </location>
</feature>
<feature type="splice variant" id="VSP_033211" description="In isoform 2." evidence="3">
    <location>
        <begin position="103"/>
        <end position="300"/>
    </location>
</feature>
<feature type="sequence conflict" description="In Ref. 2; AAH08842." evidence="4" ref="2">
    <original>M</original>
    <variation>I</variation>
    <location>
        <position position="244"/>
    </location>
</feature>
<sequence>MAEPTVCSFLTKVLCAHGGRMFLKDLRGHVELSEARLRDVLQRAGPERFLLQEVETQEGLGDAEAEAAAGAVGGGGTSAWRVVAVSSVRLCARYQRGECQACDQLHFCRRHMLGKCPNRDCWSTCTLSHDIHTPVNMQVLKSHGLFGLNENQLRILLLQNDPCLLPEVCLLYNKGEALYGYCNLKDKCNKFHVCKSFVKGECKLQTCKRSHQLIHAASLKLLQDQGLNIPSVVNFQIISTYKHMKLHKMLENTDNSSPSTEHSQGLEKQGVHAAGAAEAGPLASVPAQSAKKPCPVSCEK</sequence>
<name>ZCCHL_HUMAN</name>
<keyword id="KW-0007">Acetylation</keyword>
<keyword id="KW-0025">Alternative splicing</keyword>
<keyword id="KW-0903">Direct protein sequencing</keyword>
<keyword id="KW-1267">Proteomics identification</keyword>
<keyword id="KW-1185">Reference proteome</keyword>
<accession>Q96H79</accession>
<accession>Q8WUD9</accession>
<dbReference type="EMBL" id="AC083868">
    <property type="status" value="NOT_ANNOTATED_CDS"/>
    <property type="molecule type" value="Genomic_DNA"/>
</dbReference>
<dbReference type="EMBL" id="BC008842">
    <property type="protein sequence ID" value="AAH08842.1"/>
    <property type="molecule type" value="mRNA"/>
</dbReference>
<dbReference type="EMBL" id="BC020784">
    <property type="protein sequence ID" value="AAH20784.1"/>
    <property type="molecule type" value="mRNA"/>
</dbReference>
<dbReference type="CCDS" id="CCDS5850.1">
    <molecule id="Q96H79-1"/>
</dbReference>
<dbReference type="RefSeq" id="NP_542391.2">
    <molecule id="Q96H79-1"/>
    <property type="nucleotide sequence ID" value="NM_080660.4"/>
</dbReference>
<dbReference type="SMR" id="Q96H79"/>
<dbReference type="BioGRID" id="124907">
    <property type="interactions" value="42"/>
</dbReference>
<dbReference type="FunCoup" id="Q96H79">
    <property type="interactions" value="357"/>
</dbReference>
<dbReference type="IntAct" id="Q96H79">
    <property type="interactions" value="14"/>
</dbReference>
<dbReference type="MINT" id="Q96H79"/>
<dbReference type="STRING" id="9606.ENSP00000275766"/>
<dbReference type="GlyGen" id="Q96H79">
    <property type="glycosylation" value="1 site, 1 O-linked glycan (1 site)"/>
</dbReference>
<dbReference type="iPTMnet" id="Q96H79"/>
<dbReference type="MetOSite" id="Q96H79"/>
<dbReference type="PhosphoSitePlus" id="Q96H79"/>
<dbReference type="BioMuta" id="ZC3HAV1L"/>
<dbReference type="DMDM" id="296453031"/>
<dbReference type="jPOST" id="Q96H79"/>
<dbReference type="MassIVE" id="Q96H79"/>
<dbReference type="PaxDb" id="9606-ENSP00000275766"/>
<dbReference type="PeptideAtlas" id="Q96H79"/>
<dbReference type="ProteomicsDB" id="76710">
    <molecule id="Q96H79-1"/>
</dbReference>
<dbReference type="ProteomicsDB" id="76711">
    <molecule id="Q96H79-2"/>
</dbReference>
<dbReference type="Pumba" id="Q96H79"/>
<dbReference type="Antibodypedia" id="18221">
    <property type="antibodies" value="76 antibodies from 17 providers"/>
</dbReference>
<dbReference type="DNASU" id="92092"/>
<dbReference type="Ensembl" id="ENST00000275766.2">
    <molecule id="Q96H79-1"/>
    <property type="protein sequence ID" value="ENSP00000275766.1"/>
    <property type="gene ID" value="ENSG00000146858.8"/>
</dbReference>
<dbReference type="GeneID" id="92092"/>
<dbReference type="KEGG" id="hsa:92092"/>
<dbReference type="MANE-Select" id="ENST00000275766.2">
    <property type="protein sequence ID" value="ENSP00000275766.1"/>
    <property type="RefSeq nucleotide sequence ID" value="NM_080660.4"/>
    <property type="RefSeq protein sequence ID" value="NP_542391.2"/>
</dbReference>
<dbReference type="UCSC" id="uc003vum.1">
    <molecule id="Q96H79-1"/>
    <property type="organism name" value="human"/>
</dbReference>
<dbReference type="AGR" id="HGNC:22423"/>
<dbReference type="CTD" id="92092"/>
<dbReference type="DisGeNET" id="92092"/>
<dbReference type="GeneCards" id="ZC3HAV1L"/>
<dbReference type="HGNC" id="HGNC:22423">
    <property type="gene designation" value="ZC3HAV1L"/>
</dbReference>
<dbReference type="HPA" id="ENSG00000146858">
    <property type="expression patterns" value="Low tissue specificity"/>
</dbReference>
<dbReference type="neXtProt" id="NX_Q96H79"/>
<dbReference type="OpenTargets" id="ENSG00000146858"/>
<dbReference type="PharmGKB" id="PA145147600"/>
<dbReference type="VEuPathDB" id="HostDB:ENSG00000146858"/>
<dbReference type="eggNOG" id="ENOG502T12H">
    <property type="taxonomic scope" value="Eukaryota"/>
</dbReference>
<dbReference type="GeneTree" id="ENSGT00710000106871"/>
<dbReference type="HOGENOM" id="CLU_085581_0_0_1"/>
<dbReference type="InParanoid" id="Q96H79"/>
<dbReference type="OMA" id="MLGKCPH"/>
<dbReference type="OrthoDB" id="6133115at2759"/>
<dbReference type="PAN-GO" id="Q96H79">
    <property type="GO annotations" value="0 GO annotations based on evolutionary models"/>
</dbReference>
<dbReference type="PhylomeDB" id="Q96H79"/>
<dbReference type="TreeFam" id="TF338389"/>
<dbReference type="PathwayCommons" id="Q96H79"/>
<dbReference type="SignaLink" id="Q96H79"/>
<dbReference type="BioGRID-ORCS" id="92092">
    <property type="hits" value="14 hits in 1151 CRISPR screens"/>
</dbReference>
<dbReference type="ChiTaRS" id="ZC3HAV1L">
    <property type="organism name" value="human"/>
</dbReference>
<dbReference type="GenomeRNAi" id="92092"/>
<dbReference type="Pharos" id="Q96H79">
    <property type="development level" value="Tdark"/>
</dbReference>
<dbReference type="PRO" id="PR:Q96H79"/>
<dbReference type="Proteomes" id="UP000005640">
    <property type="component" value="Chromosome 7"/>
</dbReference>
<dbReference type="RNAct" id="Q96H79">
    <property type="molecule type" value="protein"/>
</dbReference>
<dbReference type="Bgee" id="ENSG00000146858">
    <property type="expression patterns" value="Expressed in adrenal tissue and 97 other cell types or tissues"/>
</dbReference>
<dbReference type="GO" id="GO:0005829">
    <property type="term" value="C:cytosol"/>
    <property type="evidence" value="ECO:0000314"/>
    <property type="project" value="HPA"/>
</dbReference>
<dbReference type="FunFam" id="1.10.10.10:FF:000428">
    <property type="entry name" value="Zinc finger CCCH-type containing, antiviral 1"/>
    <property type="match status" value="1"/>
</dbReference>
<dbReference type="Gene3D" id="1.10.10.10">
    <property type="entry name" value="Winged helix-like DNA-binding domain superfamily/Winged helix DNA-binding domain"/>
    <property type="match status" value="1"/>
</dbReference>
<dbReference type="InterPro" id="IPR036388">
    <property type="entry name" value="WH-like_DNA-bd_sf"/>
</dbReference>
<dbReference type="InterPro" id="IPR041360">
    <property type="entry name" value="ZAP_HTH"/>
</dbReference>
<dbReference type="InterPro" id="IPR026693">
    <property type="entry name" value="Zc3hav1-like"/>
</dbReference>
<dbReference type="PANTHER" id="PTHR47621">
    <property type="entry name" value="ZINC FINGER CCCH-TYPE ANTIVIRAL PROTEIN 1-LIKE"/>
    <property type="match status" value="1"/>
</dbReference>
<dbReference type="PANTHER" id="PTHR47621:SF1">
    <property type="entry name" value="ZINC FINGER CCCH-TYPE ANTIVIRAL PROTEIN 1-LIKE"/>
    <property type="match status" value="1"/>
</dbReference>
<dbReference type="Pfam" id="PF18606">
    <property type="entry name" value="HTH_53"/>
    <property type="match status" value="1"/>
</dbReference>
<dbReference type="Pfam" id="PF25261">
    <property type="entry name" value="zf-CCCH_PARP12"/>
    <property type="match status" value="1"/>
</dbReference>
<proteinExistence type="evidence at protein level"/>